<accession>Q6CSN0</accession>
<keyword id="KW-1003">Cell membrane</keyword>
<keyword id="KW-0406">Ion transport</keyword>
<keyword id="KW-0408">Iron</keyword>
<keyword id="KW-0410">Iron transport</keyword>
<keyword id="KW-0472">Membrane</keyword>
<keyword id="KW-1185">Reference proteome</keyword>
<keyword id="KW-0812">Transmembrane</keyword>
<keyword id="KW-1133">Transmembrane helix</keyword>
<keyword id="KW-0813">Transport</keyword>
<protein>
    <recommendedName>
        <fullName evidence="4">MFS-type transporter PUL3</fullName>
    </recommendedName>
    <alternativeName>
        <fullName evidence="4">Pulcherrimin biosynthesis cluster protein 3</fullName>
    </alternativeName>
</protein>
<proteinExistence type="inferred from homology"/>
<sequence length="460" mass="50444">MKLTDSQKHLYSQYLAVTLIAVQFSFDTCVYLSSVVQYVKECGSDDPENYLFILQAVSAAVQVFFSFIIGDIASYVGSIKWVIIFLYFLSFVGNFLYSCAGAVSLNTLLGGRIICGAASSSGAVVYSYITAISKDRTTIFKLFSIYRTSAGICMALAQLVAILFALCDFTVRGYRITSYNAPTFASSFIILLICVLLMFVLENPPVKSARNPKNYLDAWKKFFSAGSNRLIASLILLWNMFLSTFFMCEVLYFMPIFLTLNVGWKTEYEGVAFMVSAVLGVAGSFFAPDLVKLFAKLNTPSTQDETDTSDNDKIEKEESEQKSDINTLHRNQVSLTIFALFVALIGQAFMIGASEALSNDKLPKTNSGIFFTAGLSITMLGYNFMGSSVPALFSMYIDPQVKVQLMPFIGAIAGVGKLVAPIVLAALYKTPLGLPIGVGFGMILVGISIPSLVYLRRNKM</sequence>
<feature type="chain" id="PRO_0000445899" description="MFS-type transporter PUL3">
    <location>
        <begin position="1"/>
        <end position="460"/>
    </location>
</feature>
<feature type="transmembrane region" description="Helical" evidence="1">
    <location>
        <begin position="16"/>
        <end position="36"/>
    </location>
</feature>
<feature type="transmembrane region" description="Helical" evidence="1">
    <location>
        <begin position="50"/>
        <end position="70"/>
    </location>
</feature>
<feature type="transmembrane region" description="Helical" evidence="1">
    <location>
        <begin position="81"/>
        <end position="101"/>
    </location>
</feature>
<feature type="transmembrane region" description="Helical" evidence="1">
    <location>
        <begin position="113"/>
        <end position="133"/>
    </location>
</feature>
<feature type="transmembrane region" description="Helical" evidence="1">
    <location>
        <begin position="151"/>
        <end position="171"/>
    </location>
</feature>
<feature type="transmembrane region" description="Helical" evidence="1">
    <location>
        <begin position="181"/>
        <end position="201"/>
    </location>
</feature>
<feature type="transmembrane region" description="Helical" evidence="1">
    <location>
        <begin position="240"/>
        <end position="260"/>
    </location>
</feature>
<feature type="transmembrane region" description="Helical" evidence="1">
    <location>
        <begin position="271"/>
        <end position="291"/>
    </location>
</feature>
<feature type="transmembrane region" description="Helical" evidence="1">
    <location>
        <begin position="333"/>
        <end position="353"/>
    </location>
</feature>
<feature type="transmembrane region" description="Helical" evidence="1">
    <location>
        <begin position="369"/>
        <end position="389"/>
    </location>
</feature>
<feature type="transmembrane region" description="Helical" evidence="1">
    <location>
        <begin position="408"/>
        <end position="428"/>
    </location>
</feature>
<feature type="transmembrane region" description="Helical" evidence="1">
    <location>
        <begin position="433"/>
        <end position="453"/>
    </location>
</feature>
<feature type="region of interest" description="Disordered" evidence="2">
    <location>
        <begin position="300"/>
        <end position="323"/>
    </location>
</feature>
<feature type="compositionally biased region" description="Basic and acidic residues" evidence="2">
    <location>
        <begin position="310"/>
        <end position="323"/>
    </location>
</feature>
<dbReference type="EMBL" id="CR382123">
    <property type="protein sequence ID" value="CAH01910.1"/>
    <property type="molecule type" value="Genomic_DNA"/>
</dbReference>
<dbReference type="RefSeq" id="XP_453059.1">
    <property type="nucleotide sequence ID" value="XM_453059.1"/>
</dbReference>
<dbReference type="SMR" id="Q6CSN0"/>
<dbReference type="FunCoup" id="Q6CSN0">
    <property type="interactions" value="11"/>
</dbReference>
<dbReference type="STRING" id="284590.Q6CSN0"/>
<dbReference type="PaxDb" id="284590-Q6CSN0"/>
<dbReference type="GeneID" id="2892210"/>
<dbReference type="KEGG" id="kla:KLLA0_C19250g"/>
<dbReference type="eggNOG" id="ENOG502R1WK">
    <property type="taxonomic scope" value="Eukaryota"/>
</dbReference>
<dbReference type="HOGENOM" id="CLU_047735_0_0_1"/>
<dbReference type="InParanoid" id="Q6CSN0"/>
<dbReference type="OMA" id="QAFMIGA"/>
<dbReference type="Proteomes" id="UP000000598">
    <property type="component" value="Chromosome C"/>
</dbReference>
<dbReference type="GO" id="GO:0005886">
    <property type="term" value="C:plasma membrane"/>
    <property type="evidence" value="ECO:0007669"/>
    <property type="project" value="UniProtKB-SubCell"/>
</dbReference>
<dbReference type="GO" id="GO:0022857">
    <property type="term" value="F:transmembrane transporter activity"/>
    <property type="evidence" value="ECO:0007669"/>
    <property type="project" value="InterPro"/>
</dbReference>
<dbReference type="GO" id="GO:0006826">
    <property type="term" value="P:iron ion transport"/>
    <property type="evidence" value="ECO:0007669"/>
    <property type="project" value="UniProtKB-KW"/>
</dbReference>
<dbReference type="Gene3D" id="1.20.1250.20">
    <property type="entry name" value="MFS general substrate transporter like domains"/>
    <property type="match status" value="1"/>
</dbReference>
<dbReference type="InterPro" id="IPR011701">
    <property type="entry name" value="MFS"/>
</dbReference>
<dbReference type="InterPro" id="IPR051068">
    <property type="entry name" value="MFS_Domain-Containing_Protein"/>
</dbReference>
<dbReference type="InterPro" id="IPR036259">
    <property type="entry name" value="MFS_trans_sf"/>
</dbReference>
<dbReference type="PANTHER" id="PTHR23510">
    <property type="entry name" value="INNER MEMBRANE TRANSPORT PROTEIN YAJR"/>
    <property type="match status" value="1"/>
</dbReference>
<dbReference type="PANTHER" id="PTHR23510:SF3">
    <property type="entry name" value="MAJOR FACILITATOR SUPERFAMILY DOMAIN-CONTAINING PROTEIN 8"/>
    <property type="match status" value="1"/>
</dbReference>
<dbReference type="Pfam" id="PF07690">
    <property type="entry name" value="MFS_1"/>
    <property type="match status" value="1"/>
</dbReference>
<dbReference type="SUPFAM" id="SSF103473">
    <property type="entry name" value="MFS general substrate transporter"/>
    <property type="match status" value="1"/>
</dbReference>
<organism>
    <name type="scientific">Kluyveromyces lactis (strain ATCC 8585 / CBS 2359 / DSM 70799 / NBRC 1267 / NRRL Y-1140 / WM37)</name>
    <name type="common">Yeast</name>
    <name type="synonym">Candida sphaerica</name>
    <dbReference type="NCBI Taxonomy" id="284590"/>
    <lineage>
        <taxon>Eukaryota</taxon>
        <taxon>Fungi</taxon>
        <taxon>Dikarya</taxon>
        <taxon>Ascomycota</taxon>
        <taxon>Saccharomycotina</taxon>
        <taxon>Saccharomycetes</taxon>
        <taxon>Saccharomycetales</taxon>
        <taxon>Saccharomycetaceae</taxon>
        <taxon>Kluyveromyces</taxon>
    </lineage>
</organism>
<name>PUL3_KLULA</name>
<evidence type="ECO:0000255" key="1"/>
<evidence type="ECO:0000256" key="2">
    <source>
        <dbReference type="SAM" id="MobiDB-lite"/>
    </source>
</evidence>
<evidence type="ECO:0000269" key="3">
    <source>
    </source>
</evidence>
<evidence type="ECO:0000303" key="4">
    <source>
    </source>
</evidence>
<evidence type="ECO:0000305" key="5"/>
<evidence type="ECO:0000305" key="6">
    <source>
    </source>
</evidence>
<gene>
    <name evidence="4" type="primary">PUL3</name>
    <name type="ordered locus">KLLA0_C19250g</name>
</gene>
<comment type="function">
    <text evidence="3">MFS-type transporer required for the uptake of iron via the uptake of the siderophore pulcherrimin-iron complex.</text>
</comment>
<comment type="subcellular location">
    <subcellularLocation>
        <location evidence="6">Cell membrane</location>
        <topology evidence="1">Multi-pass membrane protein</topology>
    </subcellularLocation>
</comment>
<comment type="disruption phenotype">
    <text evidence="3">Still produces pulcherrimin, but grows poorly when producing pulcherrimin.</text>
</comment>
<comment type="similarity">
    <text evidence="5">Belongs to the major facilitator superfamily. TCR/Tet family.</text>
</comment>
<reference key="1">
    <citation type="journal article" date="2004" name="Nature">
        <title>Genome evolution in yeasts.</title>
        <authorList>
            <person name="Dujon B."/>
            <person name="Sherman D."/>
            <person name="Fischer G."/>
            <person name="Durrens P."/>
            <person name="Casaregola S."/>
            <person name="Lafontaine I."/>
            <person name="de Montigny J."/>
            <person name="Marck C."/>
            <person name="Neuveglise C."/>
            <person name="Talla E."/>
            <person name="Goffard N."/>
            <person name="Frangeul L."/>
            <person name="Aigle M."/>
            <person name="Anthouard V."/>
            <person name="Babour A."/>
            <person name="Barbe V."/>
            <person name="Barnay S."/>
            <person name="Blanchin S."/>
            <person name="Beckerich J.-M."/>
            <person name="Beyne E."/>
            <person name="Bleykasten C."/>
            <person name="Boisrame A."/>
            <person name="Boyer J."/>
            <person name="Cattolico L."/>
            <person name="Confanioleri F."/>
            <person name="de Daruvar A."/>
            <person name="Despons L."/>
            <person name="Fabre E."/>
            <person name="Fairhead C."/>
            <person name="Ferry-Dumazet H."/>
            <person name="Groppi A."/>
            <person name="Hantraye F."/>
            <person name="Hennequin C."/>
            <person name="Jauniaux N."/>
            <person name="Joyet P."/>
            <person name="Kachouri R."/>
            <person name="Kerrest A."/>
            <person name="Koszul R."/>
            <person name="Lemaire M."/>
            <person name="Lesur I."/>
            <person name="Ma L."/>
            <person name="Muller H."/>
            <person name="Nicaud J.-M."/>
            <person name="Nikolski M."/>
            <person name="Oztas S."/>
            <person name="Ozier-Kalogeropoulos O."/>
            <person name="Pellenz S."/>
            <person name="Potier S."/>
            <person name="Richard G.-F."/>
            <person name="Straub M.-L."/>
            <person name="Suleau A."/>
            <person name="Swennen D."/>
            <person name="Tekaia F."/>
            <person name="Wesolowski-Louvel M."/>
            <person name="Westhof E."/>
            <person name="Wirth B."/>
            <person name="Zeniou-Meyer M."/>
            <person name="Zivanovic Y."/>
            <person name="Bolotin-Fukuhara M."/>
            <person name="Thierry A."/>
            <person name="Bouchier C."/>
            <person name="Caudron B."/>
            <person name="Scarpelli C."/>
            <person name="Gaillardin C."/>
            <person name="Weissenbach J."/>
            <person name="Wincker P."/>
            <person name="Souciet J.-L."/>
        </authorList>
    </citation>
    <scope>NUCLEOTIDE SEQUENCE [LARGE SCALE GENOMIC DNA]</scope>
    <source>
        <strain>ATCC 8585 / CBS 2359 / DSM 70799 / NBRC 1267 / NRRL Y-1140 / WM37</strain>
    </source>
</reference>
<reference key="2">
    <citation type="journal article" date="2018" name="Proc. Natl. Acad. Sci. U.S.A.">
        <title>Functional and evolutionary characterization of a secondary metabolite gene cluster in budding yeasts.</title>
        <authorList>
            <person name="Krause D.J."/>
            <person name="Kominek J."/>
            <person name="Opulente D.A."/>
            <person name="Shen X.X."/>
            <person name="Zhou X."/>
            <person name="Langdon Q.K."/>
            <person name="DeVirgilio J."/>
            <person name="Hulfachor A.B."/>
            <person name="Kurtzman C.P."/>
            <person name="Rokas A."/>
            <person name="Hittinger C.T."/>
        </authorList>
    </citation>
    <scope>IDENTIFICATION</scope>
    <scope>DISRUPTION PHENOTYPE</scope>
    <scope>FUNCTION</scope>
</reference>